<keyword id="KW-0025">Alternative splicing</keyword>
<keyword id="KW-0217">Developmental protein</keyword>
<keyword id="KW-0238">DNA-binding</keyword>
<keyword id="KW-0371">Homeobox</keyword>
<keyword id="KW-0539">Nucleus</keyword>
<keyword id="KW-1185">Reference proteome</keyword>
<protein>
    <recommendedName>
        <fullName>Homeobox protein unc-62</fullName>
    </recommendedName>
    <alternativeName>
        <fullName>Uncoordinated protein 62</fullName>
    </alternativeName>
</protein>
<feature type="chain" id="PRO_0000341483" description="Homeobox protein unc-62">
    <location>
        <begin position="1"/>
        <end position="564"/>
    </location>
</feature>
<feature type="domain" description="MEIS N-terminal" evidence="1">
    <location>
        <begin position="133"/>
        <end position="218"/>
    </location>
</feature>
<feature type="DNA-binding region" description="Homeobox; TALE-type" evidence="2">
    <location>
        <begin position="392"/>
        <end position="454"/>
    </location>
</feature>
<feature type="region of interest" description="Disordered" evidence="3">
    <location>
        <begin position="40"/>
        <end position="59"/>
    </location>
</feature>
<feature type="region of interest" description="Disordered" evidence="3">
    <location>
        <begin position="216"/>
        <end position="270"/>
    </location>
</feature>
<feature type="region of interest" description="Disordered" evidence="3">
    <location>
        <begin position="293"/>
        <end position="313"/>
    </location>
</feature>
<feature type="region of interest" description="Disordered" evidence="3">
    <location>
        <begin position="328"/>
        <end position="397"/>
    </location>
</feature>
<feature type="region of interest" description="Disordered" evidence="3">
    <location>
        <begin position="455"/>
        <end position="503"/>
    </location>
</feature>
<feature type="compositionally biased region" description="Low complexity" evidence="3">
    <location>
        <begin position="219"/>
        <end position="230"/>
    </location>
</feature>
<feature type="compositionally biased region" description="Polar residues" evidence="3">
    <location>
        <begin position="328"/>
        <end position="344"/>
    </location>
</feature>
<feature type="compositionally biased region" description="Polar residues" evidence="3">
    <location>
        <begin position="381"/>
        <end position="390"/>
    </location>
</feature>
<feature type="compositionally biased region" description="Polar residues" evidence="3">
    <location>
        <begin position="455"/>
        <end position="469"/>
    </location>
</feature>
<feature type="compositionally biased region" description="Polar residues" evidence="3">
    <location>
        <begin position="494"/>
        <end position="503"/>
    </location>
</feature>
<feature type="splice variant" id="VSP_052827" description="In isoform d." evidence="10">
    <location>
        <begin position="1"/>
        <end position="453"/>
    </location>
</feature>
<feature type="splice variant" id="VSP_052828" description="In isoform g." evidence="10">
    <location>
        <begin position="1"/>
        <end position="74"/>
    </location>
</feature>
<feature type="splice variant" id="VSP_052829" description="In isoform b and isoform e." evidence="9">
    <original>SGDSKVWAHASADTWAVQNGISTYDLDTSSIKREKRDHNE</original>
    <variation>AQR</variation>
    <location>
        <begin position="2"/>
        <end position="41"/>
    </location>
</feature>
<feature type="splice variant" id="VSP_052830" description="In isoform c." evidence="10">
    <original>SGDS</original>
    <variation>FNFQ</variation>
    <location>
        <begin position="2"/>
        <end position="5"/>
    </location>
</feature>
<feature type="splice variant" id="VSP_052831" description="In isoform c." evidence="10">
    <location>
        <begin position="6"/>
        <end position="416"/>
    </location>
</feature>
<feature type="splice variant" id="VSP_052832" description="In isoform e and isoform f." evidence="9">
    <original>GDEFSVCGSNDDGRDSVLSDSANGSQNGKRKVPKVFSKEAITKFRAWLFH</original>
    <variation>APSSASSSSSSKNKPSTPNGGRIGKSRGRGIFPKQATNRLRQWLFQ</variation>
    <location>
        <begin position="364"/>
        <end position="413"/>
    </location>
</feature>
<comment type="function">
    <text evidence="4 5 6 7">Acts redundantly with ceh-20 and ceh-40 to perform overlapping roles during embryogenesis (PubMed:12399316). Required for postembryonic development of the ectoderm, including the Q, V and P cell lineages, playing a crucial role in ensuring that these cells and their descendants undergo their invariant patterns of cell division, migration, fusion and morphogenesis (PubMed:15750187). Has a role in the mig-13 pathway to promote anterior migration of neuroblasts in the Q lineage (PubMed:15750187). Required for multiple roles in regulating vulva development (PubMed:15750187). Associates with homeobox ceh-60 to regulate gene expression, including repression of genes involved in innate immunity and activation of genes involved in vitellogenesis (PubMed:30956009, PubMed:31675356). Involved in lipid homeostasis, contributing to the formation of the cuticle (PubMed:30956009, PubMed:31675356).</text>
</comment>
<comment type="subunit">
    <text evidence="6 7">Forms a heterodimer with homeobox ceh-60.</text>
</comment>
<comment type="interaction">
    <interactant intactId="EBI-319775">
        <id>Q9N5D6</id>
    </interactant>
    <interactant intactId="EBI-2416925">
        <id>P41779</id>
        <label>ceh-20</label>
    </interactant>
    <organismsDiffer>false</organismsDiffer>
    <experiments>3</experiments>
</comment>
<comment type="interaction">
    <interactant intactId="EBI-319775">
        <id>Q9N5D6</id>
    </interactant>
    <interactant intactId="EBI-319764">
        <id>Q19503</id>
        <label>ceh-40</label>
    </interactant>
    <organismsDiffer>false</organismsDiffer>
    <experiments>4</experiments>
</comment>
<comment type="subcellular location">
    <subcellularLocation>
        <location evidence="2">Nucleus</location>
    </subcellularLocation>
</comment>
<comment type="alternative products">
    <event type="alternative splicing"/>
    <isoform>
        <id>Q9N5D6-1</id>
        <name evidence="4">a</name>
        <name evidence="4">1a-7b</name>
        <sequence type="displayed"/>
    </isoform>
    <isoform>
        <id>Q9N5D6-2</id>
        <name evidence="4">b</name>
        <name evidence="4">1b-7b</name>
        <sequence type="described" ref="VSP_052829"/>
    </isoform>
    <isoform>
        <id>Q9N5D6-3</id>
        <name evidence="8">c</name>
        <sequence type="described" ref="VSP_052830 VSP_052831"/>
    </isoform>
    <isoform>
        <id>Q9N5D6-4</id>
        <name evidence="8">d</name>
        <sequence type="described" ref="VSP_052827"/>
    </isoform>
    <isoform>
        <id>Q9N5D6-5</id>
        <name evidence="4">e</name>
        <name evidence="4">1b-7a</name>
        <sequence type="described" ref="VSP_052829 VSP_052832"/>
    </isoform>
    <isoform>
        <id>Q9N5D6-6</id>
        <name evidence="4">f</name>
        <name evidence="4">1a-7a</name>
        <sequence type="described" ref="VSP_052832"/>
    </isoform>
    <isoform>
        <id>Q9N5D6-7</id>
        <name evidence="8">g</name>
        <sequence type="described" ref="VSP_052828"/>
    </isoform>
</comment>
<comment type="developmental stage">
    <text evidence="4 5">Expressed both maternally and zygotically. Isoform a and isoform f are more abundant than isoform b and isoform e, but their temporal patterns of accumulation are similar. All are present in adult germline, pregastrulation embryos, later embryos and adult soma.</text>
</comment>
<comment type="disruption phenotype">
    <text evidence="4 6">Worms exhibit severe posterior disorganization during embryogenesis (Nob phenotype) (PubMed:12399316). Mutants exhibit Q cell migration defects, affecting cell position along the anterior posterior axis (PubMed:12399316). RNAi mediated knockdown abolishes nuclear localization of ceh-60 (PubMed:30956009). RNAi mediated knockdown targeted to the intestine represses expression of vitellogenin genes; further repressed on ceh-60 mutant background (PubMed:30956009).</text>
</comment>
<comment type="similarity">
    <text evidence="1">Belongs to the TALE/MEIS homeobox family.</text>
</comment>
<reference evidence="11 12" key="1">
    <citation type="journal article" date="2002" name="Development">
        <title>Roles of the Homothorax/Meis/Prep homolog UNC-62 and the Exd/Pbx homologs CEH-20 and CEH-40 in C. elegans embryogenesis.</title>
        <authorList>
            <person name="Van Auken K."/>
            <person name="Weaver D."/>
            <person name="Robertson B."/>
            <person name="Sundaram M."/>
            <person name="Saldi T."/>
            <person name="Edgar L."/>
            <person name="Elling U."/>
            <person name="Lee M."/>
            <person name="Boese Q."/>
            <person name="Wood W.B."/>
        </authorList>
    </citation>
    <scope>NUCLEOTIDE SEQUENCE [MRNA] (ISOFORMS A; B; E AND F)</scope>
    <scope>FUNCTION</scope>
    <scope>DEVELOPMENTAL STAGE</scope>
    <scope>DISRUPTION PHENOTYPE</scope>
    <source>
        <strain evidence="12">Bristol N2</strain>
    </source>
</reference>
<reference evidence="11" key="2">
    <citation type="journal article" date="1998" name="Science">
        <title>Genome sequence of the nematode C. elegans: a platform for investigating biology.</title>
        <authorList>
            <consortium name="The C. elegans sequencing consortium"/>
        </authorList>
    </citation>
    <scope>NUCLEOTIDE SEQUENCE [LARGE SCALE GENOMIC DNA]</scope>
    <scope>ALTERNATIVE SPLICING</scope>
    <source>
        <strain>Bristol N2</strain>
    </source>
</reference>
<reference evidence="11" key="3">
    <citation type="journal article" date="2005" name="Development">
        <title>The roles of two C. elegans HOX co-factor orthologs in cell migration and vulva development.</title>
        <authorList>
            <person name="Yang L."/>
            <person name="Sym M."/>
            <person name="Kenyon C."/>
        </authorList>
    </citation>
    <scope>FUNCTION</scope>
    <scope>DEVELOPMENTAL STAGE</scope>
</reference>
<reference key="4">
    <citation type="journal article" date="2019" name="Dev. Cell">
        <title>CEH-60/PBX and UNC-62/MEIS Coordinate a Metabolic Switch that Supports Reproduction in C. elegans.</title>
        <authorList>
            <person name="Dowen R.H."/>
        </authorList>
    </citation>
    <scope>FUNCTION</scope>
    <scope>INTERACTION WITH CEH-60</scope>
    <scope>DISRUPTION PHENOTYPE</scope>
</reference>
<reference key="5">
    <citation type="journal article" date="2019" name="PLoS Biol.">
        <title>CEH-60/PBX regulates vitellogenesis and cuticle permeability through intestinal interaction with UNC-62/MEIS in Caenorhabditis elegans.</title>
        <authorList>
            <person name="Van de Walle P."/>
            <person name="Geens E."/>
            <person name="Baggerman G."/>
            <person name="Jose Naranjo-Galindo F."/>
            <person name="Askjaer P."/>
            <person name="Schoofs L."/>
            <person name="Temmerman L."/>
        </authorList>
    </citation>
    <scope>FUNCTION</scope>
    <scope>INTERACTION WITH CEH-60</scope>
</reference>
<accession>Q9N5D6</accession>
<accession>Q5TKQ8</accession>
<accession>Q8MXU6</accession>
<accession>Q8MXU7</accession>
<accession>Q8WRQ5</accession>
<accession>Q8WRQ6</accession>
<accession>Q9N5D5</accession>
<gene>
    <name type="primary">unc-62</name>
    <name type="ORF">T28F12.2</name>
</gene>
<sequence>MSGDSKVWAHASADTWAVQNGISTYDLDTSSIKREKRDHNEQFNDGYGPPPGSASADPASYIADPAAFYNLYTNMGGAPTSTPMMHHEMGEAMKRDKESIYAHPLYPLLVLLFEKCELATSTPRDTSRDGSTSSDVCSSASFKDDLNEFVRHTQENADKQYYVPNPQLDQIMLQSIQMLRFHLLELEKVHELCDNFCNRYVVCLKGKMPLDIVGDERASSSQPPMSPGSMGHLGHSSSPSMAGGATPMHYPPPYEPQSVPLPENAGVMGGHPMEGSSMAYSMAGMAAAAASSSSSSNQAGDHPLANGGTLHSTAGASQTLLPIAVSSPSTCSSGGLRQDSTPLSGETPMGHANGNSMDSISEAGDEFSVCGSNDDGRDSVLSDSANGSQNGKRKVPKVFSKEAITKFRAWLFHNLTHPYPSEEQKKQLAKETGLTILQVNNWFINARRRIVQPMIDQNNRAGRSGQMNVCKNRRRNRSEQSPGPSPDSGSDSGANYSPDPSSLAASTAMPYPAEFYMQRTMPYGGFPSFTNPAMPFMNPMMGFQVAPTVDALSQQWVDLSAPHE</sequence>
<evidence type="ECO:0000255" key="1"/>
<evidence type="ECO:0000255" key="2">
    <source>
        <dbReference type="PROSITE-ProRule" id="PRU00108"/>
    </source>
</evidence>
<evidence type="ECO:0000256" key="3">
    <source>
        <dbReference type="SAM" id="MobiDB-lite"/>
    </source>
</evidence>
<evidence type="ECO:0000269" key="4">
    <source>
    </source>
</evidence>
<evidence type="ECO:0000269" key="5">
    <source>
    </source>
</evidence>
<evidence type="ECO:0000269" key="6">
    <source>
    </source>
</evidence>
<evidence type="ECO:0000269" key="7">
    <source>
    </source>
</evidence>
<evidence type="ECO:0000269" key="8">
    <source>
    </source>
</evidence>
<evidence type="ECO:0000303" key="9">
    <source>
    </source>
</evidence>
<evidence type="ECO:0000303" key="10">
    <source>
    </source>
</evidence>
<evidence type="ECO:0000305" key="11"/>
<evidence type="ECO:0000312" key="12">
    <source>
        <dbReference type="EMBL" id="AAL65143.1"/>
    </source>
</evidence>
<dbReference type="EMBL" id="AF427474">
    <property type="protein sequence ID" value="AAL65142.1"/>
    <property type="molecule type" value="mRNA"/>
</dbReference>
<dbReference type="EMBL" id="AF427475">
    <property type="protein sequence ID" value="AAL65143.1"/>
    <property type="molecule type" value="mRNA"/>
</dbReference>
<dbReference type="EMBL" id="AF427476">
    <property type="protein sequence ID" value="AAL65144.1"/>
    <property type="molecule type" value="mRNA"/>
</dbReference>
<dbReference type="EMBL" id="AF427477">
    <property type="protein sequence ID" value="AAL65145.1"/>
    <property type="molecule type" value="mRNA"/>
</dbReference>
<dbReference type="EMBL" id="FO081534">
    <property type="protein sequence ID" value="CCD72261.1"/>
    <property type="molecule type" value="Genomic_DNA"/>
</dbReference>
<dbReference type="EMBL" id="FO081534">
    <property type="protein sequence ID" value="CCD72262.1"/>
    <property type="molecule type" value="Genomic_DNA"/>
</dbReference>
<dbReference type="EMBL" id="FO081534">
    <property type="protein sequence ID" value="CCD72263.1"/>
    <property type="molecule type" value="Genomic_DNA"/>
</dbReference>
<dbReference type="EMBL" id="FO081534">
    <property type="protein sequence ID" value="CCD72264.1"/>
    <property type="molecule type" value="Genomic_DNA"/>
</dbReference>
<dbReference type="EMBL" id="FO081534">
    <property type="protein sequence ID" value="CCD72265.1"/>
    <property type="molecule type" value="Genomic_DNA"/>
</dbReference>
<dbReference type="EMBL" id="FO081534">
    <property type="protein sequence ID" value="CCD72266.1"/>
    <property type="molecule type" value="Genomic_DNA"/>
</dbReference>
<dbReference type="EMBL" id="FO081534">
    <property type="protein sequence ID" value="CCD72267.1"/>
    <property type="molecule type" value="Genomic_DNA"/>
</dbReference>
<dbReference type="RefSeq" id="NP_001024169.1">
    <molecule id="Q9N5D6-1"/>
    <property type="nucleotide sequence ID" value="NM_001028998.5"/>
</dbReference>
<dbReference type="RefSeq" id="NP_001024170.1">
    <molecule id="Q9N5D6-2"/>
    <property type="nucleotide sequence ID" value="NM_001028999.5"/>
</dbReference>
<dbReference type="RefSeq" id="NP_001024171.1">
    <property type="nucleotide sequence ID" value="NM_001029000.1"/>
</dbReference>
<dbReference type="RefSeq" id="NP_001024172.1">
    <property type="nucleotide sequence ID" value="NM_001029001.2"/>
</dbReference>
<dbReference type="RefSeq" id="NP_001024173.1">
    <molecule id="Q9N5D6-5"/>
    <property type="nucleotide sequence ID" value="NM_001029002.4"/>
</dbReference>
<dbReference type="RefSeq" id="NP_001024174.1">
    <property type="nucleotide sequence ID" value="NM_001029003.2"/>
</dbReference>
<dbReference type="RefSeq" id="NP_001024175.1">
    <molecule id="Q9N5D6-7"/>
    <property type="nucleotide sequence ID" value="NM_001029004.5"/>
</dbReference>
<dbReference type="RefSeq" id="NP_001367923.1">
    <molecule id="Q9N5D6-4"/>
    <property type="nucleotide sequence ID" value="NM_001380635.2"/>
</dbReference>
<dbReference type="RefSeq" id="NP_001367924.1">
    <molecule id="Q9N5D6-6"/>
    <property type="nucleotide sequence ID" value="NM_001380634.1"/>
</dbReference>
<dbReference type="RefSeq" id="NP_001370772.1">
    <molecule id="Q9N5D6-3"/>
    <property type="nucleotide sequence ID" value="NM_001383298.1"/>
</dbReference>
<dbReference type="SMR" id="Q9N5D6"/>
<dbReference type="BioGRID" id="43897">
    <property type="interactions" value="94"/>
</dbReference>
<dbReference type="DIP" id="DIP-26061N"/>
<dbReference type="FunCoup" id="Q9N5D6">
    <property type="interactions" value="1526"/>
</dbReference>
<dbReference type="IntAct" id="Q9N5D6">
    <property type="interactions" value="79"/>
</dbReference>
<dbReference type="STRING" id="6239.T28F12.2a.2"/>
<dbReference type="PaxDb" id="6239-T28F12.2a"/>
<dbReference type="PeptideAtlas" id="Q9N5D6"/>
<dbReference type="EnsemblMetazoa" id="T28F12.2a.1">
    <molecule id="Q9N5D6-1"/>
    <property type="protein sequence ID" value="T28F12.2a.1"/>
    <property type="gene ID" value="WBGene00006796"/>
</dbReference>
<dbReference type="EnsemblMetazoa" id="T28F12.2b.1">
    <molecule id="Q9N5D6-2"/>
    <property type="protein sequence ID" value="T28F12.2b.1"/>
    <property type="gene ID" value="WBGene00006796"/>
</dbReference>
<dbReference type="EnsemblMetazoa" id="T28F12.2c.1">
    <molecule id="Q9N5D6-3"/>
    <property type="protein sequence ID" value="T28F12.2c.1"/>
    <property type="gene ID" value="WBGene00006796"/>
</dbReference>
<dbReference type="EnsemblMetazoa" id="T28F12.2c.2">
    <molecule id="Q9N5D6-3"/>
    <property type="protein sequence ID" value="T28F12.2c.2"/>
    <property type="gene ID" value="WBGene00006796"/>
</dbReference>
<dbReference type="EnsemblMetazoa" id="T28F12.2d.1">
    <molecule id="Q9N5D6-4"/>
    <property type="protein sequence ID" value="T28F12.2d.1"/>
    <property type="gene ID" value="WBGene00006796"/>
</dbReference>
<dbReference type="EnsemblMetazoa" id="T28F12.2d.10">
    <molecule id="Q9N5D6-4"/>
    <property type="protein sequence ID" value="T28F12.2d.10"/>
    <property type="gene ID" value="WBGene00006796"/>
</dbReference>
<dbReference type="EnsemblMetazoa" id="T28F12.2d.2">
    <molecule id="Q9N5D6-4"/>
    <property type="protein sequence ID" value="T28F12.2d.2"/>
    <property type="gene ID" value="WBGene00006796"/>
</dbReference>
<dbReference type="EnsemblMetazoa" id="T28F12.2d.3">
    <molecule id="Q9N5D6-4"/>
    <property type="protein sequence ID" value="T28F12.2d.3"/>
    <property type="gene ID" value="WBGene00006796"/>
</dbReference>
<dbReference type="EnsemblMetazoa" id="T28F12.2d.4">
    <molecule id="Q9N5D6-4"/>
    <property type="protein sequence ID" value="T28F12.2d.4"/>
    <property type="gene ID" value="WBGene00006796"/>
</dbReference>
<dbReference type="EnsemblMetazoa" id="T28F12.2d.5">
    <molecule id="Q9N5D6-4"/>
    <property type="protein sequence ID" value="T28F12.2d.5"/>
    <property type="gene ID" value="WBGene00006796"/>
</dbReference>
<dbReference type="EnsemblMetazoa" id="T28F12.2d.6">
    <molecule id="Q9N5D6-4"/>
    <property type="protein sequence ID" value="T28F12.2d.6"/>
    <property type="gene ID" value="WBGene00006796"/>
</dbReference>
<dbReference type="EnsemblMetazoa" id="T28F12.2d.7">
    <molecule id="Q9N5D6-4"/>
    <property type="protein sequence ID" value="T28F12.2d.7"/>
    <property type="gene ID" value="WBGene00006796"/>
</dbReference>
<dbReference type="EnsemblMetazoa" id="T28F12.2d.8">
    <molecule id="Q9N5D6-4"/>
    <property type="protein sequence ID" value="T28F12.2d.8"/>
    <property type="gene ID" value="WBGene00006796"/>
</dbReference>
<dbReference type="EnsemblMetazoa" id="T28F12.2d.9">
    <molecule id="Q9N5D6-4"/>
    <property type="protein sequence ID" value="T28F12.2d.9"/>
    <property type="gene ID" value="WBGene00006796"/>
</dbReference>
<dbReference type="EnsemblMetazoa" id="T28F12.2e.1">
    <molecule id="Q9N5D6-5"/>
    <property type="protein sequence ID" value="T28F12.2e.1"/>
    <property type="gene ID" value="WBGene00006796"/>
</dbReference>
<dbReference type="EnsemblMetazoa" id="T28F12.2f.1">
    <molecule id="Q9N5D6-6"/>
    <property type="protein sequence ID" value="T28F12.2f.1"/>
    <property type="gene ID" value="WBGene00006796"/>
</dbReference>
<dbReference type="EnsemblMetazoa" id="T28F12.2g.1">
    <molecule id="Q9N5D6-7"/>
    <property type="protein sequence ID" value="T28F12.2g.1"/>
    <property type="gene ID" value="WBGene00006796"/>
</dbReference>
<dbReference type="GeneID" id="178845"/>
<dbReference type="KEGG" id="cel:CELE_T28F12.2"/>
<dbReference type="UCSC" id="T28F12.2a.1">
    <molecule id="Q9N5D6-1"/>
    <property type="organism name" value="c. elegans"/>
</dbReference>
<dbReference type="AGR" id="WB:WBGene00006796"/>
<dbReference type="CTD" id="178845"/>
<dbReference type="WormBase" id="T28F12.2a">
    <molecule id="Q9N5D6-1"/>
    <property type="protein sequence ID" value="CE21219"/>
    <property type="gene ID" value="WBGene00006796"/>
    <property type="gene designation" value="unc-62"/>
</dbReference>
<dbReference type="WormBase" id="T28F12.2b">
    <molecule id="Q9N5D6-2"/>
    <property type="protein sequence ID" value="CE21220"/>
    <property type="gene ID" value="WBGene00006796"/>
    <property type="gene designation" value="unc-62"/>
</dbReference>
<dbReference type="WormBase" id="T28F12.2c">
    <molecule id="Q9N5D6-3"/>
    <property type="protein sequence ID" value="CE31073"/>
    <property type="gene ID" value="WBGene00006796"/>
    <property type="gene designation" value="unc-62"/>
</dbReference>
<dbReference type="WormBase" id="T28F12.2d">
    <molecule id="Q9N5D6-4"/>
    <property type="protein sequence ID" value="CE31074"/>
    <property type="gene ID" value="WBGene00006796"/>
    <property type="gene designation" value="unc-62"/>
</dbReference>
<dbReference type="WormBase" id="T28F12.2e">
    <molecule id="Q9N5D6-5"/>
    <property type="protein sequence ID" value="CE33584"/>
    <property type="gene ID" value="WBGene00006796"/>
    <property type="gene designation" value="unc-62"/>
</dbReference>
<dbReference type="WormBase" id="T28F12.2f">
    <molecule id="Q9N5D6-6"/>
    <property type="protein sequence ID" value="CE33585"/>
    <property type="gene ID" value="WBGene00006796"/>
    <property type="gene designation" value="unc-62"/>
</dbReference>
<dbReference type="WormBase" id="T28F12.2g">
    <molecule id="Q9N5D6-7"/>
    <property type="protein sequence ID" value="CE37795"/>
    <property type="gene ID" value="WBGene00006796"/>
    <property type="gene designation" value="unc-62"/>
</dbReference>
<dbReference type="eggNOG" id="KOG0773">
    <property type="taxonomic scope" value="Eukaryota"/>
</dbReference>
<dbReference type="GeneTree" id="ENSGT00940000168996"/>
<dbReference type="InParanoid" id="Q9N5D6"/>
<dbReference type="OMA" id="AATAMHY"/>
<dbReference type="OrthoDB" id="10056939at2759"/>
<dbReference type="PhylomeDB" id="Q9N5D6"/>
<dbReference type="SignaLink" id="Q9N5D6"/>
<dbReference type="PRO" id="PR:Q9N5D6"/>
<dbReference type="Proteomes" id="UP000001940">
    <property type="component" value="Chromosome V"/>
</dbReference>
<dbReference type="Bgee" id="WBGene00006796">
    <property type="expression patterns" value="Expressed in embryo and 3 other cell types or tissues"/>
</dbReference>
<dbReference type="ExpressionAtlas" id="Q9N5D6">
    <property type="expression patterns" value="baseline and differential"/>
</dbReference>
<dbReference type="GO" id="GO:0000785">
    <property type="term" value="C:chromatin"/>
    <property type="evidence" value="ECO:0000314"/>
    <property type="project" value="UniProtKB"/>
</dbReference>
<dbReference type="GO" id="GO:0005634">
    <property type="term" value="C:nucleus"/>
    <property type="evidence" value="ECO:0000314"/>
    <property type="project" value="WormBase"/>
</dbReference>
<dbReference type="GO" id="GO:0001228">
    <property type="term" value="F:DNA-binding transcription activator activity, RNA polymerase II-specific"/>
    <property type="evidence" value="ECO:0000318"/>
    <property type="project" value="GO_Central"/>
</dbReference>
<dbReference type="GO" id="GO:0000978">
    <property type="term" value="F:RNA polymerase II cis-regulatory region sequence-specific DNA binding"/>
    <property type="evidence" value="ECO:0000315"/>
    <property type="project" value="UniProtKB"/>
</dbReference>
<dbReference type="GO" id="GO:0009887">
    <property type="term" value="P:animal organ morphogenesis"/>
    <property type="evidence" value="ECO:0000318"/>
    <property type="project" value="GO_Central"/>
</dbReference>
<dbReference type="GO" id="GO:0007420">
    <property type="term" value="P:brain development"/>
    <property type="evidence" value="ECO:0000318"/>
    <property type="project" value="GO_Central"/>
</dbReference>
<dbReference type="GO" id="GO:0009880">
    <property type="term" value="P:embryonic pattern specification"/>
    <property type="evidence" value="ECO:0000318"/>
    <property type="project" value="GO_Central"/>
</dbReference>
<dbReference type="GO" id="GO:0001654">
    <property type="term" value="P:eye development"/>
    <property type="evidence" value="ECO:0000318"/>
    <property type="project" value="GO_Central"/>
</dbReference>
<dbReference type="GO" id="GO:0055088">
    <property type="term" value="P:lipid homeostasis"/>
    <property type="evidence" value="ECO:0000315"/>
    <property type="project" value="UniProtKB"/>
</dbReference>
<dbReference type="GO" id="GO:0007501">
    <property type="term" value="P:mesodermal cell fate specification"/>
    <property type="evidence" value="ECO:0000315"/>
    <property type="project" value="WormBase"/>
</dbReference>
<dbReference type="GO" id="GO:0042692">
    <property type="term" value="P:muscle cell differentiation"/>
    <property type="evidence" value="ECO:0000315"/>
    <property type="project" value="WormBase"/>
</dbReference>
<dbReference type="GO" id="GO:0048665">
    <property type="term" value="P:neuron fate specification"/>
    <property type="evidence" value="ECO:0000316"/>
    <property type="project" value="UniProtKB"/>
</dbReference>
<dbReference type="GO" id="GO:0008284">
    <property type="term" value="P:positive regulation of cell population proliferation"/>
    <property type="evidence" value="ECO:0000318"/>
    <property type="project" value="GO_Central"/>
</dbReference>
<dbReference type="GO" id="GO:0045944">
    <property type="term" value="P:positive regulation of transcription by RNA polymerase II"/>
    <property type="evidence" value="ECO:0000318"/>
    <property type="project" value="GO_Central"/>
</dbReference>
<dbReference type="GO" id="GO:0045727">
    <property type="term" value="P:positive regulation of translation"/>
    <property type="evidence" value="ECO:0000315"/>
    <property type="project" value="WormBase"/>
</dbReference>
<dbReference type="GO" id="GO:0006357">
    <property type="term" value="P:regulation of transcription by RNA polymerase II"/>
    <property type="evidence" value="ECO:0000315"/>
    <property type="project" value="UniProtKB"/>
</dbReference>
<dbReference type="CDD" id="cd00086">
    <property type="entry name" value="homeodomain"/>
    <property type="match status" value="1"/>
</dbReference>
<dbReference type="FunFam" id="1.10.10.60:FF:000004">
    <property type="entry name" value="Meis2 homeobox isoform 2c"/>
    <property type="match status" value="1"/>
</dbReference>
<dbReference type="Gene3D" id="1.10.10.60">
    <property type="entry name" value="Homeodomain-like"/>
    <property type="match status" value="1"/>
</dbReference>
<dbReference type="InterPro" id="IPR001356">
    <property type="entry name" value="HD"/>
</dbReference>
<dbReference type="InterPro" id="IPR009057">
    <property type="entry name" value="Homeodomain-like_sf"/>
</dbReference>
<dbReference type="InterPro" id="IPR008422">
    <property type="entry name" value="KN_HD"/>
</dbReference>
<dbReference type="InterPro" id="IPR032453">
    <property type="entry name" value="PKNOX/Meis_N"/>
</dbReference>
<dbReference type="InterPro" id="IPR050224">
    <property type="entry name" value="TALE_homeobox"/>
</dbReference>
<dbReference type="PANTHER" id="PTHR11850">
    <property type="entry name" value="HOMEOBOX PROTEIN TRANSCRIPTION FACTORS"/>
    <property type="match status" value="1"/>
</dbReference>
<dbReference type="Pfam" id="PF05920">
    <property type="entry name" value="Homeobox_KN"/>
    <property type="match status" value="1"/>
</dbReference>
<dbReference type="Pfam" id="PF16493">
    <property type="entry name" value="Meis_PKNOX_N"/>
    <property type="match status" value="1"/>
</dbReference>
<dbReference type="SMART" id="SM00389">
    <property type="entry name" value="HOX"/>
    <property type="match status" value="1"/>
</dbReference>
<dbReference type="SUPFAM" id="SSF46689">
    <property type="entry name" value="Homeodomain-like"/>
    <property type="match status" value="1"/>
</dbReference>
<dbReference type="PROSITE" id="PS50071">
    <property type="entry name" value="HOMEOBOX_2"/>
    <property type="match status" value="1"/>
</dbReference>
<proteinExistence type="evidence at protein level"/>
<name>UNC62_CAEEL</name>
<organism>
    <name type="scientific">Caenorhabditis elegans</name>
    <dbReference type="NCBI Taxonomy" id="6239"/>
    <lineage>
        <taxon>Eukaryota</taxon>
        <taxon>Metazoa</taxon>
        <taxon>Ecdysozoa</taxon>
        <taxon>Nematoda</taxon>
        <taxon>Chromadorea</taxon>
        <taxon>Rhabditida</taxon>
        <taxon>Rhabditina</taxon>
        <taxon>Rhabditomorpha</taxon>
        <taxon>Rhabditoidea</taxon>
        <taxon>Rhabditidae</taxon>
        <taxon>Peloderinae</taxon>
        <taxon>Caenorhabditis</taxon>
    </lineage>
</organism>